<protein>
    <recommendedName>
        <fullName evidence="3">Large ribosomal subunit protein bL27m</fullName>
    </recommendedName>
    <alternativeName>
        <fullName evidence="3">39S ribosomal protein L27, mitochondrial</fullName>
        <shortName>L27mt</shortName>
        <shortName>MRP-L27</shortName>
    </alternativeName>
</protein>
<comment type="subcellular location">
    <subcellularLocation>
        <location evidence="1">Mitochondrion</location>
    </subcellularLocation>
</comment>
<comment type="similarity">
    <text evidence="3">Belongs to the bacterial ribosomal protein bL27 family.</text>
</comment>
<name>RM27_DICDI</name>
<dbReference type="EMBL" id="AAFI02000024">
    <property type="protein sequence ID" value="EAL68046.1"/>
    <property type="molecule type" value="Genomic_DNA"/>
</dbReference>
<dbReference type="RefSeq" id="XP_647803.1">
    <property type="nucleotide sequence ID" value="XM_642711.1"/>
</dbReference>
<dbReference type="SMR" id="Q54XK0"/>
<dbReference type="FunCoup" id="Q54XK0">
    <property type="interactions" value="138"/>
</dbReference>
<dbReference type="STRING" id="44689.Q54XK0"/>
<dbReference type="PaxDb" id="44689-DDB0252561"/>
<dbReference type="EnsemblProtists" id="EAL68046">
    <property type="protein sequence ID" value="EAL68046"/>
    <property type="gene ID" value="DDB_G0278889"/>
</dbReference>
<dbReference type="GeneID" id="8621763"/>
<dbReference type="KEGG" id="ddi:DDB_G0278889"/>
<dbReference type="dictyBase" id="DDB_G0278889">
    <property type="gene designation" value="mrpl27"/>
</dbReference>
<dbReference type="VEuPathDB" id="AmoebaDB:DDB_G0278889"/>
<dbReference type="eggNOG" id="KOG4600">
    <property type="taxonomic scope" value="Eukaryota"/>
</dbReference>
<dbReference type="HOGENOM" id="CLU_095424_1_0_1"/>
<dbReference type="InParanoid" id="Q54XK0"/>
<dbReference type="OMA" id="WATHKSA"/>
<dbReference type="PhylomeDB" id="Q54XK0"/>
<dbReference type="PRO" id="PR:Q54XK0"/>
<dbReference type="Proteomes" id="UP000002195">
    <property type="component" value="Chromosome 3"/>
</dbReference>
<dbReference type="GO" id="GO:0005762">
    <property type="term" value="C:mitochondrial large ribosomal subunit"/>
    <property type="evidence" value="ECO:0000318"/>
    <property type="project" value="GO_Central"/>
</dbReference>
<dbReference type="GO" id="GO:0003735">
    <property type="term" value="F:structural constituent of ribosome"/>
    <property type="evidence" value="ECO:0000318"/>
    <property type="project" value="GO_Central"/>
</dbReference>
<dbReference type="GO" id="GO:0006412">
    <property type="term" value="P:translation"/>
    <property type="evidence" value="ECO:0007669"/>
    <property type="project" value="InterPro"/>
</dbReference>
<dbReference type="FunFam" id="2.40.50.100:FF:000020">
    <property type="entry name" value="50S ribosomal protein L27"/>
    <property type="match status" value="1"/>
</dbReference>
<dbReference type="Gene3D" id="2.40.50.100">
    <property type="match status" value="1"/>
</dbReference>
<dbReference type="InterPro" id="IPR001684">
    <property type="entry name" value="Ribosomal_bL27"/>
</dbReference>
<dbReference type="InterPro" id="IPR018261">
    <property type="entry name" value="Ribosomal_bL27_CS"/>
</dbReference>
<dbReference type="NCBIfam" id="TIGR00062">
    <property type="entry name" value="L27"/>
    <property type="match status" value="1"/>
</dbReference>
<dbReference type="PANTHER" id="PTHR15893:SF0">
    <property type="entry name" value="LARGE RIBOSOMAL SUBUNIT PROTEIN BL27M"/>
    <property type="match status" value="1"/>
</dbReference>
<dbReference type="PANTHER" id="PTHR15893">
    <property type="entry name" value="RIBOSOMAL PROTEIN L27"/>
    <property type="match status" value="1"/>
</dbReference>
<dbReference type="Pfam" id="PF01016">
    <property type="entry name" value="Ribosomal_L27"/>
    <property type="match status" value="1"/>
</dbReference>
<dbReference type="PRINTS" id="PR00063">
    <property type="entry name" value="RIBOSOMALL27"/>
</dbReference>
<dbReference type="SUPFAM" id="SSF110324">
    <property type="entry name" value="Ribosomal L27 protein-like"/>
    <property type="match status" value="1"/>
</dbReference>
<dbReference type="PROSITE" id="PS00831">
    <property type="entry name" value="RIBOSOMAL_L27"/>
    <property type="match status" value="1"/>
</dbReference>
<gene>
    <name type="primary">mrpl27</name>
    <name type="ORF">DDB_G0278889</name>
</gene>
<organism>
    <name type="scientific">Dictyostelium discoideum</name>
    <name type="common">Social amoeba</name>
    <dbReference type="NCBI Taxonomy" id="44689"/>
    <lineage>
        <taxon>Eukaryota</taxon>
        <taxon>Amoebozoa</taxon>
        <taxon>Evosea</taxon>
        <taxon>Eumycetozoa</taxon>
        <taxon>Dictyostelia</taxon>
        <taxon>Dictyosteliales</taxon>
        <taxon>Dictyosteliaceae</taxon>
        <taxon>Dictyostelium</taxon>
    </lineage>
</organism>
<reference key="1">
    <citation type="journal article" date="2005" name="Nature">
        <title>The genome of the social amoeba Dictyostelium discoideum.</title>
        <authorList>
            <person name="Eichinger L."/>
            <person name="Pachebat J.A."/>
            <person name="Gloeckner G."/>
            <person name="Rajandream M.A."/>
            <person name="Sucgang R."/>
            <person name="Berriman M."/>
            <person name="Song J."/>
            <person name="Olsen R."/>
            <person name="Szafranski K."/>
            <person name="Xu Q."/>
            <person name="Tunggal B."/>
            <person name="Kummerfeld S."/>
            <person name="Madera M."/>
            <person name="Konfortov B.A."/>
            <person name="Rivero F."/>
            <person name="Bankier A.T."/>
            <person name="Lehmann R."/>
            <person name="Hamlin N."/>
            <person name="Davies R."/>
            <person name="Gaudet P."/>
            <person name="Fey P."/>
            <person name="Pilcher K."/>
            <person name="Chen G."/>
            <person name="Saunders D."/>
            <person name="Sodergren E.J."/>
            <person name="Davis P."/>
            <person name="Kerhornou A."/>
            <person name="Nie X."/>
            <person name="Hall N."/>
            <person name="Anjard C."/>
            <person name="Hemphill L."/>
            <person name="Bason N."/>
            <person name="Farbrother P."/>
            <person name="Desany B."/>
            <person name="Just E."/>
            <person name="Morio T."/>
            <person name="Rost R."/>
            <person name="Churcher C.M."/>
            <person name="Cooper J."/>
            <person name="Haydock S."/>
            <person name="van Driessche N."/>
            <person name="Cronin A."/>
            <person name="Goodhead I."/>
            <person name="Muzny D.M."/>
            <person name="Mourier T."/>
            <person name="Pain A."/>
            <person name="Lu M."/>
            <person name="Harper D."/>
            <person name="Lindsay R."/>
            <person name="Hauser H."/>
            <person name="James K.D."/>
            <person name="Quiles M."/>
            <person name="Madan Babu M."/>
            <person name="Saito T."/>
            <person name="Buchrieser C."/>
            <person name="Wardroper A."/>
            <person name="Felder M."/>
            <person name="Thangavelu M."/>
            <person name="Johnson D."/>
            <person name="Knights A."/>
            <person name="Loulseged H."/>
            <person name="Mungall K.L."/>
            <person name="Oliver K."/>
            <person name="Price C."/>
            <person name="Quail M.A."/>
            <person name="Urushihara H."/>
            <person name="Hernandez J."/>
            <person name="Rabbinowitsch E."/>
            <person name="Steffen D."/>
            <person name="Sanders M."/>
            <person name="Ma J."/>
            <person name="Kohara Y."/>
            <person name="Sharp S."/>
            <person name="Simmonds M.N."/>
            <person name="Spiegler S."/>
            <person name="Tivey A."/>
            <person name="Sugano S."/>
            <person name="White B."/>
            <person name="Walker D."/>
            <person name="Woodward J.R."/>
            <person name="Winckler T."/>
            <person name="Tanaka Y."/>
            <person name="Shaulsky G."/>
            <person name="Schleicher M."/>
            <person name="Weinstock G.M."/>
            <person name="Rosenthal A."/>
            <person name="Cox E.C."/>
            <person name="Chisholm R.L."/>
            <person name="Gibbs R.A."/>
            <person name="Loomis W.F."/>
            <person name="Platzer M."/>
            <person name="Kay R.R."/>
            <person name="Williams J.G."/>
            <person name="Dear P.H."/>
            <person name="Noegel A.A."/>
            <person name="Barrell B.G."/>
            <person name="Kuspa A."/>
        </authorList>
    </citation>
    <scope>NUCLEOTIDE SEQUENCE [LARGE SCALE GENOMIC DNA]</scope>
    <source>
        <strain>AX4</strain>
    </source>
</reference>
<accession>Q54XK0</accession>
<proteinExistence type="inferred from homology"/>
<sequence length="142" mass="15653">MSFFRGTFSTSSLFINTVDSVTKRFATKKSAGSTKNGRTSQPKNLGLKKSGNQLVYPGEIIIRQRGTEFHPGTFVGMGKDHTIFSKTIGLVSFSKEPKFPGSKKTRRFISVAPLYTNNININTNIDTSIDTNVNNNNSNINI</sequence>
<keyword id="KW-0496">Mitochondrion</keyword>
<keyword id="KW-1185">Reference proteome</keyword>
<keyword id="KW-0687">Ribonucleoprotein</keyword>
<keyword id="KW-0689">Ribosomal protein</keyword>
<feature type="chain" id="PRO_0000325088" description="Large ribosomal subunit protein bL27m">
    <location>
        <begin position="1"/>
        <end position="142"/>
    </location>
</feature>
<feature type="region of interest" description="Disordered" evidence="2">
    <location>
        <begin position="27"/>
        <end position="48"/>
    </location>
</feature>
<feature type="compositionally biased region" description="Polar residues" evidence="2">
    <location>
        <begin position="30"/>
        <end position="43"/>
    </location>
</feature>
<evidence type="ECO:0000250" key="1"/>
<evidence type="ECO:0000256" key="2">
    <source>
        <dbReference type="SAM" id="MobiDB-lite"/>
    </source>
</evidence>
<evidence type="ECO:0000305" key="3"/>